<accession>Q9CR21</accession>
<accession>Q9D726</accession>
<accession>Q9D7V5</accession>
<protein>
    <recommendedName>
        <fullName evidence="7">Acyl carrier protein, mitochondrial</fullName>
        <shortName>ACP</shortName>
    </recommendedName>
    <alternativeName>
        <fullName>CI-SDAP</fullName>
    </alternativeName>
    <alternativeName>
        <fullName>NADH-ubiquinone oxidoreductase 9.6 kDa subunit</fullName>
    </alternativeName>
</protein>
<organism>
    <name type="scientific">Mus musculus</name>
    <name type="common">Mouse</name>
    <dbReference type="NCBI Taxonomy" id="10090"/>
    <lineage>
        <taxon>Eukaryota</taxon>
        <taxon>Metazoa</taxon>
        <taxon>Chordata</taxon>
        <taxon>Craniata</taxon>
        <taxon>Vertebrata</taxon>
        <taxon>Euteleostomi</taxon>
        <taxon>Mammalia</taxon>
        <taxon>Eutheria</taxon>
        <taxon>Euarchontoglires</taxon>
        <taxon>Glires</taxon>
        <taxon>Rodentia</taxon>
        <taxon>Myomorpha</taxon>
        <taxon>Muroidea</taxon>
        <taxon>Muridae</taxon>
        <taxon>Murinae</taxon>
        <taxon>Mus</taxon>
        <taxon>Mus</taxon>
    </lineage>
</organism>
<comment type="function">
    <text evidence="2 3 4 6">Carrier of the growing fatty acid chain in fatty acid biosynthesis (By similarity). Accessory and non-catalytic subunit of the mitochondrial membrane respiratory chain NADH dehydrogenase (Complex I), which functions in the transfer of electrons from NADH to the respiratory chain (PubMed:38575788). Accessory protein, of the core iron-sulfur cluster (ISC) assembly complex, that regulates, in association with LYRM4, the stability and the cysteine desulfurase activity of NFS1 and participates in the [2Fe-2S] clusters assembly on the scaffolding protein ISCU (By similarity). The core iron-sulfur cluster (ISC) assembly complex is involved in the de novo synthesis of a [2Fe-2S] cluster, the first step of the mitochondrial iron-sulfur protein biogenesis. This process is initiated by the cysteine desulfurase complex (NFS1:LYRM4:NDUFAB1) that produces persulfide which is delivered on the scaffold protein ISCU in a FXN-dependent manner. Then this complex is stabilized by FDX2 which provides reducing equivalents to accomplish the [2Fe-2S] cluster assembly. Finally, the [2Fe-2S] cluster is transferred from ISCU to chaperone proteins, including HSCB, HSPA9 and GLRX5 (By similarity).</text>
</comment>
<comment type="subunit">
    <text evidence="2 6">Mammalian complex I is composed of 45 different subunits (PubMed:38575788). Interacts with ETFRF1. Identified in a complex composed of MALSU1, MIEF1 upstream open reading frame protein and NDUFAB1; within the trimeric complex, MIEF1 upstream open reading frame protein functions as a bridging scaffold that interacts with MALSU1 on one side, and with NDUFAB1 on the other side. The complex interacts with the mitochondrial large ribosomal subunit. Interacts with alpha-1-microglobulin chain; this interaction is required for the maintenance of mitochondrial redox homeostasis. Component of the mitochondrial core iron-sulfur cluster (ISC) complex composed of NFS1, LYRM4, NDUFAB1, ISCU, FXN, and FDX2; this complex is a heterohexamer containing two copies of each monomer. Component of the cyteine desulfurase complex composed of NFS1, LYRM4 and NDUFAB1; this complex contributes to the stability and cysteine desulfurase activity of NFS1.</text>
</comment>
<comment type="subcellular location">
    <subcellularLocation>
        <location evidence="6">Mitochondrion</location>
    </subcellularLocation>
</comment>
<comment type="PTM">
    <text evidence="3">Phosphopantetheinylation at Ser-112 is essential for interactions with LYR motif-containing proteins.</text>
</comment>
<comment type="similarity">
    <text evidence="7">Belongs to the acyl carrier protein (ACP) family.</text>
</comment>
<name>ACPM_MOUSE</name>
<dbReference type="EMBL" id="AK008788">
    <property type="status" value="NOT_ANNOTATED_CDS"/>
    <property type="molecule type" value="mRNA"/>
</dbReference>
<dbReference type="EMBL" id="AK009698">
    <property type="protein sequence ID" value="BAB26446.1"/>
    <property type="molecule type" value="mRNA"/>
</dbReference>
<dbReference type="EMBL" id="AK010307">
    <property type="protein sequence ID" value="BAB26840.1"/>
    <property type="molecule type" value="mRNA"/>
</dbReference>
<dbReference type="EMBL" id="AK011302">
    <property type="protein sequence ID" value="BAB27528.1"/>
    <property type="molecule type" value="mRNA"/>
</dbReference>
<dbReference type="EMBL" id="AK018688">
    <property type="protein sequence ID" value="BAB31346.1"/>
    <property type="molecule type" value="mRNA"/>
</dbReference>
<dbReference type="EMBL" id="AK018717">
    <property type="protein sequence ID" value="BAB31363.1"/>
    <property type="molecule type" value="mRNA"/>
</dbReference>
<dbReference type="EMBL" id="AK089103">
    <property type="protein sequence ID" value="BAC40751.1"/>
    <property type="molecule type" value="mRNA"/>
</dbReference>
<dbReference type="EMBL" id="BC060951">
    <property type="protein sequence ID" value="AAH60951.1"/>
    <property type="molecule type" value="mRNA"/>
</dbReference>
<dbReference type="CCDS" id="CCDS21809.1"/>
<dbReference type="RefSeq" id="NP_001347672.1">
    <property type="nucleotide sequence ID" value="NM_001360743.1"/>
</dbReference>
<dbReference type="RefSeq" id="NP_001347673.1">
    <property type="nucleotide sequence ID" value="NM_001360744.1"/>
</dbReference>
<dbReference type="RefSeq" id="NP_082453.2">
    <property type="nucleotide sequence ID" value="NM_028177.3"/>
</dbReference>
<dbReference type="RefSeq" id="XP_006508263.1">
    <property type="nucleotide sequence ID" value="XM_006508200.3"/>
</dbReference>
<dbReference type="PDB" id="6G2J">
    <property type="method" value="EM"/>
    <property type="resolution" value="3.30 A"/>
    <property type="chains" value="T/U=1-156"/>
</dbReference>
<dbReference type="PDB" id="6G72">
    <property type="method" value="EM"/>
    <property type="resolution" value="3.90 A"/>
    <property type="chains" value="T/U=1-156"/>
</dbReference>
<dbReference type="PDB" id="6ZR2">
    <property type="method" value="EM"/>
    <property type="resolution" value="3.10 A"/>
    <property type="chains" value="T/U=1-156"/>
</dbReference>
<dbReference type="PDB" id="6ZTQ">
    <property type="method" value="EM"/>
    <property type="resolution" value="3.00 A"/>
    <property type="chains" value="T/U=1-156"/>
</dbReference>
<dbReference type="PDB" id="7AK5">
    <property type="method" value="EM"/>
    <property type="resolution" value="3.17 A"/>
    <property type="chains" value="T/U=1-156"/>
</dbReference>
<dbReference type="PDB" id="7AK6">
    <property type="method" value="EM"/>
    <property type="resolution" value="3.82 A"/>
    <property type="chains" value="T/U=1-156"/>
</dbReference>
<dbReference type="PDB" id="7B93">
    <property type="method" value="EM"/>
    <property type="resolution" value="3.04 A"/>
    <property type="chains" value="T/U=1-156"/>
</dbReference>
<dbReference type="PDB" id="7PSA">
    <property type="method" value="EM"/>
    <property type="resolution" value="3.40 A"/>
    <property type="chains" value="T/U=1-156"/>
</dbReference>
<dbReference type="PDB" id="8C2S">
    <property type="method" value="EM"/>
    <property type="resolution" value="3.90 A"/>
    <property type="chains" value="T/U=1-156"/>
</dbReference>
<dbReference type="PDB" id="8CA3">
    <property type="method" value="EM"/>
    <property type="resolution" value="3.20 A"/>
    <property type="chains" value="T/U=1-156"/>
</dbReference>
<dbReference type="PDB" id="8CA5">
    <property type="method" value="EM"/>
    <property type="resolution" value="3.90 A"/>
    <property type="chains" value="T/U=1-156"/>
</dbReference>
<dbReference type="PDB" id="8IAO">
    <property type="method" value="EM"/>
    <property type="resolution" value="4.20 A"/>
    <property type="chains" value="T/U=1-156"/>
</dbReference>
<dbReference type="PDB" id="8IAP">
    <property type="method" value="EM"/>
    <property type="resolution" value="3.20 A"/>
    <property type="chains" value="T=1-156"/>
</dbReference>
<dbReference type="PDB" id="8IAQ">
    <property type="method" value="EM"/>
    <property type="resolution" value="3.40 A"/>
    <property type="chains" value="U=1-156"/>
</dbReference>
<dbReference type="PDB" id="8IB4">
    <property type="method" value="EM"/>
    <property type="resolution" value="4.30 A"/>
    <property type="chains" value="T/U=1-156"/>
</dbReference>
<dbReference type="PDB" id="8IB5">
    <property type="method" value="EM"/>
    <property type="resolution" value="3.30 A"/>
    <property type="chains" value="T=1-156"/>
</dbReference>
<dbReference type="PDB" id="8IB6">
    <property type="method" value="EM"/>
    <property type="resolution" value="3.30 A"/>
    <property type="chains" value="U=1-156"/>
</dbReference>
<dbReference type="PDB" id="8IB9">
    <property type="method" value="EM"/>
    <property type="resolution" value="4.30 A"/>
    <property type="chains" value="T/U=1-156"/>
</dbReference>
<dbReference type="PDB" id="8IBA">
    <property type="method" value="EM"/>
    <property type="resolution" value="3.20 A"/>
    <property type="chains" value="T=1-156"/>
</dbReference>
<dbReference type="PDB" id="8IBB">
    <property type="method" value="EM"/>
    <property type="resolution" value="3.30 A"/>
    <property type="chains" value="U=1-156"/>
</dbReference>
<dbReference type="PDB" id="8IBD">
    <property type="method" value="EM"/>
    <property type="resolution" value="4.20 A"/>
    <property type="chains" value="T/U=1-156"/>
</dbReference>
<dbReference type="PDB" id="8IBE">
    <property type="method" value="EM"/>
    <property type="resolution" value="3.30 A"/>
    <property type="chains" value="T=1-156"/>
</dbReference>
<dbReference type="PDB" id="8IBF">
    <property type="method" value="EM"/>
    <property type="resolution" value="3.30 A"/>
    <property type="chains" value="U=1-156"/>
</dbReference>
<dbReference type="PDB" id="8IC2">
    <property type="method" value="EM"/>
    <property type="resolution" value="6.30 A"/>
    <property type="chains" value="T/U=1-156"/>
</dbReference>
<dbReference type="PDB" id="8IC3">
    <property type="method" value="EM"/>
    <property type="resolution" value="3.20 A"/>
    <property type="chains" value="T=1-156"/>
</dbReference>
<dbReference type="PDB" id="8IC4">
    <property type="method" value="EM"/>
    <property type="resolution" value="3.20 A"/>
    <property type="chains" value="U=1-156"/>
</dbReference>
<dbReference type="PDB" id="8OLT">
    <property type="method" value="EM"/>
    <property type="resolution" value="2.84 A"/>
    <property type="chains" value="T/U=1-156"/>
</dbReference>
<dbReference type="PDB" id="8OM1">
    <property type="method" value="EM"/>
    <property type="resolution" value="2.39 A"/>
    <property type="chains" value="T/U=1-156"/>
</dbReference>
<dbReference type="PDB" id="8PW5">
    <property type="method" value="EM"/>
    <property type="resolution" value="3.60 A"/>
    <property type="chains" value="T1/U1=1-156"/>
</dbReference>
<dbReference type="PDB" id="8PW6">
    <property type="method" value="EM"/>
    <property type="resolution" value="3.30 A"/>
    <property type="chains" value="T1/U1=1-156"/>
</dbReference>
<dbReference type="PDB" id="8PW7">
    <property type="method" value="EM"/>
    <property type="resolution" value="3.50 A"/>
    <property type="chains" value="T1/U1=1-156"/>
</dbReference>
<dbReference type="PDB" id="8RGP">
    <property type="method" value="EM"/>
    <property type="resolution" value="3.00 A"/>
    <property type="chains" value="T/U=1-156"/>
</dbReference>
<dbReference type="PDB" id="8RGQ">
    <property type="method" value="EM"/>
    <property type="resolution" value="3.00 A"/>
    <property type="chains" value="T/U=1-156"/>
</dbReference>
<dbReference type="PDB" id="8RGR">
    <property type="method" value="EM"/>
    <property type="resolution" value="2.90 A"/>
    <property type="chains" value="T/U=1-156"/>
</dbReference>
<dbReference type="PDB" id="8RGT">
    <property type="method" value="EM"/>
    <property type="resolution" value="3.10 A"/>
    <property type="chains" value="T/U=1-156"/>
</dbReference>
<dbReference type="PDB" id="8UCA">
    <property type="method" value="EM"/>
    <property type="resolution" value="3.70 A"/>
    <property type="chains" value="AB/AC/ab/ac=1-156"/>
</dbReference>
<dbReference type="PDB" id="8XNL">
    <property type="method" value="EM"/>
    <property type="resolution" value="3.10 A"/>
    <property type="chains" value="T=1-156"/>
</dbReference>
<dbReference type="PDB" id="8XNM">
    <property type="method" value="EM"/>
    <property type="resolution" value="3.50 A"/>
    <property type="chains" value="T=1-156"/>
</dbReference>
<dbReference type="PDB" id="8XNN">
    <property type="method" value="EM"/>
    <property type="resolution" value="3.60 A"/>
    <property type="chains" value="T=1-156"/>
</dbReference>
<dbReference type="PDB" id="8XNO">
    <property type="method" value="EM"/>
    <property type="resolution" value="3.40 A"/>
    <property type="chains" value="T=1-156"/>
</dbReference>
<dbReference type="PDB" id="8XNP">
    <property type="method" value="EM"/>
    <property type="resolution" value="3.50 A"/>
    <property type="chains" value="T=1-156"/>
</dbReference>
<dbReference type="PDB" id="8XNQ">
    <property type="method" value="EM"/>
    <property type="resolution" value="3.70 A"/>
    <property type="chains" value="T=1-156"/>
</dbReference>
<dbReference type="PDB" id="8XNR">
    <property type="method" value="EM"/>
    <property type="resolution" value="3.30 A"/>
    <property type="chains" value="T=1-156"/>
</dbReference>
<dbReference type="PDB" id="8XNS">
    <property type="method" value="EM"/>
    <property type="resolution" value="3.50 A"/>
    <property type="chains" value="T=1-156"/>
</dbReference>
<dbReference type="PDB" id="8XNT">
    <property type="method" value="EM"/>
    <property type="resolution" value="4.10 A"/>
    <property type="chains" value="T=1-156"/>
</dbReference>
<dbReference type="PDB" id="8XNU">
    <property type="method" value="EM"/>
    <property type="resolution" value="3.60 A"/>
    <property type="chains" value="T=1-156"/>
</dbReference>
<dbReference type="PDB" id="8XNV">
    <property type="method" value="EM"/>
    <property type="resolution" value="3.30 A"/>
    <property type="chains" value="T=1-156"/>
</dbReference>
<dbReference type="PDB" id="8XNW">
    <property type="method" value="EM"/>
    <property type="resolution" value="3.60 A"/>
    <property type="chains" value="T=1-156"/>
</dbReference>
<dbReference type="PDB" id="8XNX">
    <property type="method" value="EM"/>
    <property type="resolution" value="3.50 A"/>
    <property type="chains" value="T=1-156"/>
</dbReference>
<dbReference type="PDB" id="8XNY">
    <property type="method" value="EM"/>
    <property type="resolution" value="4.10 A"/>
    <property type="chains" value="T=1-156"/>
</dbReference>
<dbReference type="PDB" id="8XNZ">
    <property type="method" value="EM"/>
    <property type="resolution" value="3.30 A"/>
    <property type="chains" value="T=1-156"/>
</dbReference>
<dbReference type="PDB" id="8XO0">
    <property type="method" value="EM"/>
    <property type="resolution" value="4.20 A"/>
    <property type="chains" value="T=1-156"/>
</dbReference>
<dbReference type="PDBsum" id="6G2J"/>
<dbReference type="PDBsum" id="6G72"/>
<dbReference type="PDBsum" id="6ZR2"/>
<dbReference type="PDBsum" id="6ZTQ"/>
<dbReference type="PDBsum" id="7AK5"/>
<dbReference type="PDBsum" id="7AK6"/>
<dbReference type="PDBsum" id="7B93"/>
<dbReference type="PDBsum" id="7PSA"/>
<dbReference type="PDBsum" id="8C2S"/>
<dbReference type="PDBsum" id="8CA3"/>
<dbReference type="PDBsum" id="8CA5"/>
<dbReference type="PDBsum" id="8IAO"/>
<dbReference type="PDBsum" id="8IAP"/>
<dbReference type="PDBsum" id="8IAQ"/>
<dbReference type="PDBsum" id="8IB4"/>
<dbReference type="PDBsum" id="8IB5"/>
<dbReference type="PDBsum" id="8IB6"/>
<dbReference type="PDBsum" id="8IB9"/>
<dbReference type="PDBsum" id="8IBA"/>
<dbReference type="PDBsum" id="8IBB"/>
<dbReference type="PDBsum" id="8IBD"/>
<dbReference type="PDBsum" id="8IBE"/>
<dbReference type="PDBsum" id="8IBF"/>
<dbReference type="PDBsum" id="8IC2"/>
<dbReference type="PDBsum" id="8IC3"/>
<dbReference type="PDBsum" id="8IC4"/>
<dbReference type="PDBsum" id="8OLT"/>
<dbReference type="PDBsum" id="8OM1"/>
<dbReference type="PDBsum" id="8PW5"/>
<dbReference type="PDBsum" id="8PW6"/>
<dbReference type="PDBsum" id="8PW7"/>
<dbReference type="PDBsum" id="8RGP"/>
<dbReference type="PDBsum" id="8RGQ"/>
<dbReference type="PDBsum" id="8RGR"/>
<dbReference type="PDBsum" id="8RGT"/>
<dbReference type="PDBsum" id="8UCA"/>
<dbReference type="PDBsum" id="8XNL"/>
<dbReference type="PDBsum" id="8XNM"/>
<dbReference type="PDBsum" id="8XNN"/>
<dbReference type="PDBsum" id="8XNO"/>
<dbReference type="PDBsum" id="8XNP"/>
<dbReference type="PDBsum" id="8XNQ"/>
<dbReference type="PDBsum" id="8XNR"/>
<dbReference type="PDBsum" id="8XNS"/>
<dbReference type="PDBsum" id="8XNT"/>
<dbReference type="PDBsum" id="8XNU"/>
<dbReference type="PDBsum" id="8XNV"/>
<dbReference type="PDBsum" id="8XNW"/>
<dbReference type="PDBsum" id="8XNX"/>
<dbReference type="PDBsum" id="8XNY"/>
<dbReference type="PDBsum" id="8XNZ"/>
<dbReference type="PDBsum" id="8XO0"/>
<dbReference type="EMDB" id="EMD-11377"/>
<dbReference type="EMDB" id="EMD-11424"/>
<dbReference type="EMDB" id="EMD-11810"/>
<dbReference type="EMDB" id="EMD-11811"/>
<dbReference type="EMDB" id="EMD-12095"/>
<dbReference type="EMDB" id="EMD-13611"/>
<dbReference type="EMDB" id="EMD-16398"/>
<dbReference type="EMDB" id="EMD-16516"/>
<dbReference type="EMDB" id="EMD-16518"/>
<dbReference type="EMDB" id="EMD-16962"/>
<dbReference type="EMDB" id="EMD-16965"/>
<dbReference type="EMDB" id="EMD-17989"/>
<dbReference type="EMDB" id="EMD-17990"/>
<dbReference type="EMDB" id="EMD-17991"/>
<dbReference type="EMDB" id="EMD-19145"/>
<dbReference type="EMDB" id="EMD-19146"/>
<dbReference type="EMDB" id="EMD-19147"/>
<dbReference type="EMDB" id="EMD-19148"/>
<dbReference type="EMDB" id="EMD-35313"/>
<dbReference type="EMDB" id="EMD-35314"/>
<dbReference type="EMDB" id="EMD-35315"/>
<dbReference type="EMDB" id="EMD-35331"/>
<dbReference type="EMDB" id="EMD-35332"/>
<dbReference type="EMDB" id="EMD-35333"/>
<dbReference type="EMDB" id="EMD-35336"/>
<dbReference type="EMDB" id="EMD-35337"/>
<dbReference type="EMDB" id="EMD-35338"/>
<dbReference type="EMDB" id="EMD-35340"/>
<dbReference type="EMDB" id="EMD-35341"/>
<dbReference type="EMDB" id="EMD-35342"/>
<dbReference type="EMDB" id="EMD-35352"/>
<dbReference type="EMDB" id="EMD-35353"/>
<dbReference type="EMDB" id="EMD-35354"/>
<dbReference type="EMDB" id="EMD-38506"/>
<dbReference type="EMDB" id="EMD-38507"/>
<dbReference type="EMDB" id="EMD-38508"/>
<dbReference type="EMDB" id="EMD-38509"/>
<dbReference type="EMDB" id="EMD-38510"/>
<dbReference type="EMDB" id="EMD-38511"/>
<dbReference type="EMDB" id="EMD-38512"/>
<dbReference type="EMDB" id="EMD-38513"/>
<dbReference type="EMDB" id="EMD-38514"/>
<dbReference type="EMDB" id="EMD-38515"/>
<dbReference type="EMDB" id="EMD-38516"/>
<dbReference type="EMDB" id="EMD-38517"/>
<dbReference type="EMDB" id="EMD-38518"/>
<dbReference type="EMDB" id="EMD-38519"/>
<dbReference type="EMDB" id="EMD-38520"/>
<dbReference type="EMDB" id="EMD-38521"/>
<dbReference type="EMDB" id="EMD-42122"/>
<dbReference type="EMDB" id="EMD-4345"/>
<dbReference type="EMDB" id="EMD-4356"/>
<dbReference type="SMR" id="Q9CR21"/>
<dbReference type="BioGRID" id="213983">
    <property type="interactions" value="49"/>
</dbReference>
<dbReference type="ComplexPortal" id="CPX-266">
    <property type="entry name" value="Mitochondrial respiratory chain complex I"/>
</dbReference>
<dbReference type="ComplexPortal" id="CPX-5823">
    <property type="entry name" value="Mitochondrial NIAUFX iron-sulfur cluster assembly complex"/>
</dbReference>
<dbReference type="CORUM" id="Q9CR21"/>
<dbReference type="FunCoup" id="Q9CR21">
    <property type="interactions" value="2645"/>
</dbReference>
<dbReference type="IntAct" id="Q9CR21">
    <property type="interactions" value="43"/>
</dbReference>
<dbReference type="STRING" id="10090.ENSMUSP00000033157"/>
<dbReference type="GlyGen" id="Q9CR21">
    <property type="glycosylation" value="1 site"/>
</dbReference>
<dbReference type="iPTMnet" id="Q9CR21"/>
<dbReference type="PhosphoSitePlus" id="Q9CR21"/>
<dbReference type="SwissPalm" id="Q9CR21"/>
<dbReference type="jPOST" id="Q9CR21"/>
<dbReference type="PaxDb" id="10090-ENSMUSP00000033157"/>
<dbReference type="PeptideAtlas" id="Q9CR21"/>
<dbReference type="ProteomicsDB" id="285749"/>
<dbReference type="Pumba" id="Q9CR21"/>
<dbReference type="TopDownProteomics" id="Q9CR21"/>
<dbReference type="Antibodypedia" id="25997">
    <property type="antibodies" value="112 antibodies from 26 providers"/>
</dbReference>
<dbReference type="DNASU" id="70316"/>
<dbReference type="Ensembl" id="ENSMUST00000033157.10">
    <property type="protein sequence ID" value="ENSMUSP00000033157.4"/>
    <property type="gene ID" value="ENSMUSG00000030869.12"/>
</dbReference>
<dbReference type="Ensembl" id="ENSMUST00000123296.8">
    <property type="protein sequence ID" value="ENSMUSP00000116177.2"/>
    <property type="gene ID" value="ENSMUSG00000030869.12"/>
</dbReference>
<dbReference type="GeneID" id="70316"/>
<dbReference type="KEGG" id="mmu:70316"/>
<dbReference type="UCSC" id="uc009joh.1">
    <property type="organism name" value="mouse"/>
</dbReference>
<dbReference type="AGR" id="MGI:1917566"/>
<dbReference type="CTD" id="4706"/>
<dbReference type="MGI" id="MGI:1917566">
    <property type="gene designation" value="Ndufab1"/>
</dbReference>
<dbReference type="VEuPathDB" id="HostDB:ENSMUSG00000030869"/>
<dbReference type="eggNOG" id="KOG1748">
    <property type="taxonomic scope" value="Eukaryota"/>
</dbReference>
<dbReference type="GeneTree" id="ENSGT00390000002127"/>
<dbReference type="InParanoid" id="Q9CR21"/>
<dbReference type="OMA" id="QYCEAPP"/>
<dbReference type="OrthoDB" id="448946at2759"/>
<dbReference type="PhylomeDB" id="Q9CR21"/>
<dbReference type="TreeFam" id="TF314361"/>
<dbReference type="Reactome" id="R-MMU-611105">
    <property type="pathway name" value="Respiratory electron transport"/>
</dbReference>
<dbReference type="Reactome" id="R-MMU-6799198">
    <property type="pathway name" value="Complex I biogenesis"/>
</dbReference>
<dbReference type="Reactome" id="R-MMU-77289">
    <property type="pathway name" value="Mitochondrial Fatty Acid Beta-Oxidation"/>
</dbReference>
<dbReference type="Reactome" id="R-MMU-9857492">
    <property type="pathway name" value="Protein lipoylation"/>
</dbReference>
<dbReference type="BioGRID-ORCS" id="70316">
    <property type="hits" value="27 hits in 79 CRISPR screens"/>
</dbReference>
<dbReference type="ChiTaRS" id="Ndufab1">
    <property type="organism name" value="mouse"/>
</dbReference>
<dbReference type="PRO" id="PR:Q9CR21"/>
<dbReference type="Proteomes" id="UP000000589">
    <property type="component" value="Chromosome 7"/>
</dbReference>
<dbReference type="RNAct" id="Q9CR21">
    <property type="molecule type" value="protein"/>
</dbReference>
<dbReference type="Bgee" id="ENSMUSG00000030869">
    <property type="expression patterns" value="Expressed in right kidney and 253 other cell types or tissues"/>
</dbReference>
<dbReference type="ExpressionAtlas" id="Q9CR21">
    <property type="expression patterns" value="baseline and differential"/>
</dbReference>
<dbReference type="GO" id="GO:1990229">
    <property type="term" value="C:iron-sulfur cluster assembly complex"/>
    <property type="evidence" value="ECO:0000303"/>
    <property type="project" value="ComplexPortal"/>
</dbReference>
<dbReference type="GO" id="GO:0099128">
    <property type="term" value="C:mitochondrial [2Fe-2S] assembly complex"/>
    <property type="evidence" value="ECO:0007669"/>
    <property type="project" value="Ensembl"/>
</dbReference>
<dbReference type="GO" id="GO:0005743">
    <property type="term" value="C:mitochondrial inner membrane"/>
    <property type="evidence" value="ECO:0000314"/>
    <property type="project" value="UniProtKB"/>
</dbReference>
<dbReference type="GO" id="GO:0005739">
    <property type="term" value="C:mitochondrion"/>
    <property type="evidence" value="ECO:0007005"/>
    <property type="project" value="MGI"/>
</dbReference>
<dbReference type="GO" id="GO:0005654">
    <property type="term" value="C:nucleoplasm"/>
    <property type="evidence" value="ECO:0007669"/>
    <property type="project" value="Ensembl"/>
</dbReference>
<dbReference type="GO" id="GO:0045271">
    <property type="term" value="C:respiratory chain complex I"/>
    <property type="evidence" value="ECO:0000314"/>
    <property type="project" value="UniProtKB"/>
</dbReference>
<dbReference type="GO" id="GO:0140978">
    <property type="term" value="F:mitochondrial large ribosomal subunit binding"/>
    <property type="evidence" value="ECO:0000250"/>
    <property type="project" value="UniProtKB"/>
</dbReference>
<dbReference type="GO" id="GO:0005198">
    <property type="term" value="F:structural molecule activity"/>
    <property type="evidence" value="ECO:0007669"/>
    <property type="project" value="Ensembl"/>
</dbReference>
<dbReference type="GO" id="GO:0044571">
    <property type="term" value="P:[2Fe-2S] cluster assembly"/>
    <property type="evidence" value="ECO:0000250"/>
    <property type="project" value="UniProtKB"/>
</dbReference>
<dbReference type="GO" id="GO:0009060">
    <property type="term" value="P:aerobic respiration"/>
    <property type="evidence" value="ECO:0000303"/>
    <property type="project" value="ComplexPortal"/>
</dbReference>
<dbReference type="GO" id="GO:0006633">
    <property type="term" value="P:fatty acid biosynthetic process"/>
    <property type="evidence" value="ECO:0007669"/>
    <property type="project" value="UniProtKB-KW"/>
</dbReference>
<dbReference type="GO" id="GO:0016226">
    <property type="term" value="P:iron-sulfur cluster assembly"/>
    <property type="evidence" value="ECO:0000303"/>
    <property type="project" value="ComplexPortal"/>
</dbReference>
<dbReference type="GO" id="GO:0042776">
    <property type="term" value="P:proton motive force-driven mitochondrial ATP synthesis"/>
    <property type="evidence" value="ECO:0000303"/>
    <property type="project" value="ComplexPortal"/>
</dbReference>
<dbReference type="FunFam" id="1.10.1200.10:FF:000008">
    <property type="entry name" value="Acyl carrier protein"/>
    <property type="match status" value="1"/>
</dbReference>
<dbReference type="Gene3D" id="1.10.1200.10">
    <property type="entry name" value="ACP-like"/>
    <property type="match status" value="1"/>
</dbReference>
<dbReference type="HAMAP" id="MF_01217">
    <property type="entry name" value="Acyl_carrier"/>
    <property type="match status" value="1"/>
</dbReference>
<dbReference type="InterPro" id="IPR003231">
    <property type="entry name" value="ACP"/>
</dbReference>
<dbReference type="InterPro" id="IPR036736">
    <property type="entry name" value="ACP-like_sf"/>
</dbReference>
<dbReference type="InterPro" id="IPR009081">
    <property type="entry name" value="PP-bd_ACP"/>
</dbReference>
<dbReference type="InterPro" id="IPR006162">
    <property type="entry name" value="Ppantetheine_attach_site"/>
</dbReference>
<dbReference type="NCBIfam" id="TIGR00517">
    <property type="entry name" value="acyl_carrier"/>
    <property type="match status" value="1"/>
</dbReference>
<dbReference type="PANTHER" id="PTHR20863">
    <property type="entry name" value="ACYL CARRIER PROTEIN"/>
    <property type="match status" value="1"/>
</dbReference>
<dbReference type="PANTHER" id="PTHR20863:SF28">
    <property type="entry name" value="ACYL CARRIER PROTEIN, MITOCHONDRIAL"/>
    <property type="match status" value="1"/>
</dbReference>
<dbReference type="Pfam" id="PF00550">
    <property type="entry name" value="PP-binding"/>
    <property type="match status" value="1"/>
</dbReference>
<dbReference type="SUPFAM" id="SSF47336">
    <property type="entry name" value="ACP-like"/>
    <property type="match status" value="1"/>
</dbReference>
<dbReference type="PROSITE" id="PS50075">
    <property type="entry name" value="CARRIER"/>
    <property type="match status" value="1"/>
</dbReference>
<dbReference type="PROSITE" id="PS00012">
    <property type="entry name" value="PHOSPHOPANTETHEINE"/>
    <property type="match status" value="1"/>
</dbReference>
<proteinExistence type="evidence at protein level"/>
<evidence type="ECO:0000250" key="1"/>
<evidence type="ECO:0000250" key="2">
    <source>
        <dbReference type="UniProtKB" id="O14561"/>
    </source>
</evidence>
<evidence type="ECO:0000250" key="3">
    <source>
        <dbReference type="UniProtKB" id="P52505"/>
    </source>
</evidence>
<evidence type="ECO:0000250" key="4">
    <source>
        <dbReference type="UniProtKB" id="Q9H1K1"/>
    </source>
</evidence>
<evidence type="ECO:0000255" key="5">
    <source>
        <dbReference type="PROSITE-ProRule" id="PRU00258"/>
    </source>
</evidence>
<evidence type="ECO:0000269" key="6">
    <source>
    </source>
</evidence>
<evidence type="ECO:0000305" key="7"/>
<evidence type="ECO:0000312" key="8">
    <source>
        <dbReference type="MGI" id="MGI:1917566"/>
    </source>
</evidence>
<evidence type="ECO:0007744" key="9">
    <source>
        <dbReference type="PDB" id="8PW5"/>
    </source>
</evidence>
<evidence type="ECO:0007744" key="10">
    <source>
    </source>
</evidence>
<evidence type="ECO:0007829" key="11">
    <source>
        <dbReference type="PDB" id="6ZTQ"/>
    </source>
</evidence>
<evidence type="ECO:0007829" key="12">
    <source>
        <dbReference type="PDB" id="8OM1"/>
    </source>
</evidence>
<keyword id="KW-0002">3D-structure</keyword>
<keyword id="KW-0007">Acetylation</keyword>
<keyword id="KW-0903">Direct protein sequencing</keyword>
<keyword id="KW-0249">Electron transport</keyword>
<keyword id="KW-0275">Fatty acid biosynthesis</keyword>
<keyword id="KW-0276">Fatty acid metabolism</keyword>
<keyword id="KW-0444">Lipid biosynthesis</keyword>
<keyword id="KW-0443">Lipid metabolism</keyword>
<keyword id="KW-0496">Mitochondrion</keyword>
<keyword id="KW-0596">Phosphopantetheine</keyword>
<keyword id="KW-0597">Phosphoprotein</keyword>
<keyword id="KW-1185">Reference proteome</keyword>
<keyword id="KW-0679">Respiratory chain</keyword>
<keyword id="KW-0809">Transit peptide</keyword>
<keyword id="KW-0813">Transport</keyword>
<feature type="transit peptide" description="Mitochondrion" evidence="1">
    <location>
        <begin position="1"/>
        <end position="68"/>
    </location>
</feature>
<feature type="chain" id="PRO_0000000562" description="Acyl carrier protein, mitochondrial">
    <location>
        <begin position="69"/>
        <end position="156"/>
    </location>
</feature>
<feature type="domain" description="Carrier" evidence="5">
    <location>
        <begin position="77"/>
        <end position="152"/>
    </location>
</feature>
<feature type="modified residue" description="N6-acetyllysine" evidence="10">
    <location>
        <position position="88"/>
    </location>
</feature>
<feature type="modified residue" description="O-(pantetheine 4'-phosphoryl)serine" evidence="5">
    <location>
        <position position="112"/>
    </location>
</feature>
<feature type="sequence conflict" description="In Ref. 1; BAB26446." evidence="7" ref="1">
    <original>L</original>
    <variation>F</variation>
    <location>
        <position position="138"/>
    </location>
</feature>
<feature type="helix" evidence="12">
    <location>
        <begin position="76"/>
        <end position="89"/>
    </location>
</feature>
<feature type="strand" evidence="11">
    <location>
        <begin position="91"/>
        <end position="93"/>
    </location>
</feature>
<feature type="turn" evidence="12">
    <location>
        <begin position="95"/>
        <end position="97"/>
    </location>
</feature>
<feature type="turn" evidence="12">
    <location>
        <begin position="104"/>
        <end position="107"/>
    </location>
</feature>
<feature type="helix" evidence="12">
    <location>
        <begin position="112"/>
        <end position="126"/>
    </location>
</feature>
<feature type="helix" evidence="12">
    <location>
        <begin position="132"/>
        <end position="135"/>
    </location>
</feature>
<feature type="helix" evidence="12">
    <location>
        <begin position="141"/>
        <end position="149"/>
    </location>
</feature>
<gene>
    <name evidence="8" type="primary">Ndufab1</name>
</gene>
<reference key="1">
    <citation type="journal article" date="2005" name="Science">
        <title>The transcriptional landscape of the mammalian genome.</title>
        <authorList>
            <person name="Carninci P."/>
            <person name="Kasukawa T."/>
            <person name="Katayama S."/>
            <person name="Gough J."/>
            <person name="Frith M.C."/>
            <person name="Maeda N."/>
            <person name="Oyama R."/>
            <person name="Ravasi T."/>
            <person name="Lenhard B."/>
            <person name="Wells C."/>
            <person name="Kodzius R."/>
            <person name="Shimokawa K."/>
            <person name="Bajic V.B."/>
            <person name="Brenner S.E."/>
            <person name="Batalov S."/>
            <person name="Forrest A.R."/>
            <person name="Zavolan M."/>
            <person name="Davis M.J."/>
            <person name="Wilming L.G."/>
            <person name="Aidinis V."/>
            <person name="Allen J.E."/>
            <person name="Ambesi-Impiombato A."/>
            <person name="Apweiler R."/>
            <person name="Aturaliya R.N."/>
            <person name="Bailey T.L."/>
            <person name="Bansal M."/>
            <person name="Baxter L."/>
            <person name="Beisel K.W."/>
            <person name="Bersano T."/>
            <person name="Bono H."/>
            <person name="Chalk A.M."/>
            <person name="Chiu K.P."/>
            <person name="Choudhary V."/>
            <person name="Christoffels A."/>
            <person name="Clutterbuck D.R."/>
            <person name="Crowe M.L."/>
            <person name="Dalla E."/>
            <person name="Dalrymple B.P."/>
            <person name="de Bono B."/>
            <person name="Della Gatta G."/>
            <person name="di Bernardo D."/>
            <person name="Down T."/>
            <person name="Engstrom P."/>
            <person name="Fagiolini M."/>
            <person name="Faulkner G."/>
            <person name="Fletcher C.F."/>
            <person name="Fukushima T."/>
            <person name="Furuno M."/>
            <person name="Futaki S."/>
            <person name="Gariboldi M."/>
            <person name="Georgii-Hemming P."/>
            <person name="Gingeras T.R."/>
            <person name="Gojobori T."/>
            <person name="Green R.E."/>
            <person name="Gustincich S."/>
            <person name="Harbers M."/>
            <person name="Hayashi Y."/>
            <person name="Hensch T.K."/>
            <person name="Hirokawa N."/>
            <person name="Hill D."/>
            <person name="Huminiecki L."/>
            <person name="Iacono M."/>
            <person name="Ikeo K."/>
            <person name="Iwama A."/>
            <person name="Ishikawa T."/>
            <person name="Jakt M."/>
            <person name="Kanapin A."/>
            <person name="Katoh M."/>
            <person name="Kawasawa Y."/>
            <person name="Kelso J."/>
            <person name="Kitamura H."/>
            <person name="Kitano H."/>
            <person name="Kollias G."/>
            <person name="Krishnan S.P."/>
            <person name="Kruger A."/>
            <person name="Kummerfeld S.K."/>
            <person name="Kurochkin I.V."/>
            <person name="Lareau L.F."/>
            <person name="Lazarevic D."/>
            <person name="Lipovich L."/>
            <person name="Liu J."/>
            <person name="Liuni S."/>
            <person name="McWilliam S."/>
            <person name="Madan Babu M."/>
            <person name="Madera M."/>
            <person name="Marchionni L."/>
            <person name="Matsuda H."/>
            <person name="Matsuzawa S."/>
            <person name="Miki H."/>
            <person name="Mignone F."/>
            <person name="Miyake S."/>
            <person name="Morris K."/>
            <person name="Mottagui-Tabar S."/>
            <person name="Mulder N."/>
            <person name="Nakano N."/>
            <person name="Nakauchi H."/>
            <person name="Ng P."/>
            <person name="Nilsson R."/>
            <person name="Nishiguchi S."/>
            <person name="Nishikawa S."/>
            <person name="Nori F."/>
            <person name="Ohara O."/>
            <person name="Okazaki Y."/>
            <person name="Orlando V."/>
            <person name="Pang K.C."/>
            <person name="Pavan W.J."/>
            <person name="Pavesi G."/>
            <person name="Pesole G."/>
            <person name="Petrovsky N."/>
            <person name="Piazza S."/>
            <person name="Reed J."/>
            <person name="Reid J.F."/>
            <person name="Ring B.Z."/>
            <person name="Ringwald M."/>
            <person name="Rost B."/>
            <person name="Ruan Y."/>
            <person name="Salzberg S.L."/>
            <person name="Sandelin A."/>
            <person name="Schneider C."/>
            <person name="Schoenbach C."/>
            <person name="Sekiguchi K."/>
            <person name="Semple C.A."/>
            <person name="Seno S."/>
            <person name="Sessa L."/>
            <person name="Sheng Y."/>
            <person name="Shibata Y."/>
            <person name="Shimada H."/>
            <person name="Shimada K."/>
            <person name="Silva D."/>
            <person name="Sinclair B."/>
            <person name="Sperling S."/>
            <person name="Stupka E."/>
            <person name="Sugiura K."/>
            <person name="Sultana R."/>
            <person name="Takenaka Y."/>
            <person name="Taki K."/>
            <person name="Tammoja K."/>
            <person name="Tan S.L."/>
            <person name="Tang S."/>
            <person name="Taylor M.S."/>
            <person name="Tegner J."/>
            <person name="Teichmann S.A."/>
            <person name="Ueda H.R."/>
            <person name="van Nimwegen E."/>
            <person name="Verardo R."/>
            <person name="Wei C.L."/>
            <person name="Yagi K."/>
            <person name="Yamanishi H."/>
            <person name="Zabarovsky E."/>
            <person name="Zhu S."/>
            <person name="Zimmer A."/>
            <person name="Hide W."/>
            <person name="Bult C."/>
            <person name="Grimmond S.M."/>
            <person name="Teasdale R.D."/>
            <person name="Liu E.T."/>
            <person name="Brusic V."/>
            <person name="Quackenbush J."/>
            <person name="Wahlestedt C."/>
            <person name="Mattick J.S."/>
            <person name="Hume D.A."/>
            <person name="Kai C."/>
            <person name="Sasaki D."/>
            <person name="Tomaru Y."/>
            <person name="Fukuda S."/>
            <person name="Kanamori-Katayama M."/>
            <person name="Suzuki M."/>
            <person name="Aoki J."/>
            <person name="Arakawa T."/>
            <person name="Iida J."/>
            <person name="Imamura K."/>
            <person name="Itoh M."/>
            <person name="Kato T."/>
            <person name="Kawaji H."/>
            <person name="Kawagashira N."/>
            <person name="Kawashima T."/>
            <person name="Kojima M."/>
            <person name="Kondo S."/>
            <person name="Konno H."/>
            <person name="Nakano K."/>
            <person name="Ninomiya N."/>
            <person name="Nishio T."/>
            <person name="Okada M."/>
            <person name="Plessy C."/>
            <person name="Shibata K."/>
            <person name="Shiraki T."/>
            <person name="Suzuki S."/>
            <person name="Tagami M."/>
            <person name="Waki K."/>
            <person name="Watahiki A."/>
            <person name="Okamura-Oho Y."/>
            <person name="Suzuki H."/>
            <person name="Kawai J."/>
            <person name="Hayashizaki Y."/>
        </authorList>
    </citation>
    <scope>NUCLEOTIDE SEQUENCE [LARGE SCALE MRNA]</scope>
    <source>
        <strain>C57BL/6J</strain>
        <strain>NOD</strain>
        <tissue>Cecum</tissue>
        <tissue>Embryonic stem cell</tissue>
        <tissue>Kidney</tissue>
        <tissue>Stomach</tissue>
        <tissue>Thymus</tissue>
        <tissue>Tongue</tissue>
    </source>
</reference>
<reference key="2">
    <citation type="journal article" date="2004" name="Genome Res.">
        <title>The status, quality, and expansion of the NIH full-length cDNA project: the Mammalian Gene Collection (MGC).</title>
        <authorList>
            <consortium name="The MGC Project Team"/>
        </authorList>
    </citation>
    <scope>NUCLEOTIDE SEQUENCE [LARGE SCALE MRNA]</scope>
    <source>
        <tissue>Testis</tissue>
    </source>
</reference>
<reference key="3">
    <citation type="submission" date="2007-04" db="UniProtKB">
        <authorList>
            <person name="Lubec G."/>
            <person name="Kang S.U."/>
        </authorList>
    </citation>
    <scope>PROTEIN SEQUENCE OF 89-97 AND 138-151</scope>
    <scope>IDENTIFICATION BY MASS SPECTROMETRY</scope>
    <source>
        <strain>C57BL/6J</strain>
        <tissue>Brain</tissue>
    </source>
</reference>
<reference key="4">
    <citation type="journal article" date="2010" name="Cell">
        <title>A tissue-specific atlas of mouse protein phosphorylation and expression.</title>
        <authorList>
            <person name="Huttlin E.L."/>
            <person name="Jedrychowski M.P."/>
            <person name="Elias J.E."/>
            <person name="Goswami T."/>
            <person name="Rad R."/>
            <person name="Beausoleil S.A."/>
            <person name="Villen J."/>
            <person name="Haas W."/>
            <person name="Sowa M.E."/>
            <person name="Gygi S.P."/>
        </authorList>
    </citation>
    <scope>IDENTIFICATION BY MASS SPECTROMETRY [LARGE SCALE ANALYSIS]</scope>
    <source>
        <tissue>Brain</tissue>
        <tissue>Brown adipose tissue</tissue>
        <tissue>Heart</tissue>
        <tissue>Kidney</tissue>
        <tissue>Liver</tissue>
        <tissue>Testis</tissue>
    </source>
</reference>
<reference key="5">
    <citation type="journal article" date="2013" name="Proc. Natl. Acad. Sci. U.S.A.">
        <title>Label-free quantitative proteomics of the lysine acetylome in mitochondria identifies substrates of SIRT3 in metabolic pathways.</title>
        <authorList>
            <person name="Rardin M.J."/>
            <person name="Newman J.C."/>
            <person name="Held J.M."/>
            <person name="Cusack M.P."/>
            <person name="Sorensen D.J."/>
            <person name="Li B."/>
            <person name="Schilling B."/>
            <person name="Mooney S.D."/>
            <person name="Kahn C.R."/>
            <person name="Verdin E."/>
            <person name="Gibson B.W."/>
        </authorList>
    </citation>
    <scope>ACETYLATION [LARGE SCALE ANALYSIS] AT LYS-88</scope>
    <scope>IDENTIFICATION BY MASS SPECTROMETRY [LARGE SCALE ANALYSIS]</scope>
    <source>
        <tissue>Liver</tissue>
    </source>
</reference>
<reference evidence="9" key="6">
    <citation type="journal article" date="2024" name="Nat. Struct. Mol. Biol.">
        <title>SCAF1 drives the compositional diversity of mammalian respirasomes.</title>
        <authorList>
            <person name="Vercellino I."/>
            <person name="Sazanov L.A."/>
        </authorList>
    </citation>
    <scope>STRUCTURE BY ELECTRON MICROSCOPY (3.60 ANGSTROMS) IN COMPLEX WITH MITOCHONDRIAL RESPIRATORY SUPERCOMPLEX</scope>
    <scope>FUNCTION</scope>
    <scope>SUBCELLULAR LOCATION</scope>
    <scope>SUBUNIT</scope>
</reference>
<sequence length="156" mass="17370">MASRVLCACVRRLPAAFAPLPRLPTLALARPLSTTLCPEGIRRRPGALQSALALAQVPGTVTHLCRQYSDAPPLTLDGIKDRVLYVLKLYDKIDPEKLSVNSHFMKDLGLDSLDQVEIIMAMEDEFGFEIPDIDAEKLMCPQEIVDYIADKKDVYE</sequence>